<dbReference type="EMBL" id="CP000462">
    <property type="protein sequence ID" value="ABK38997.1"/>
    <property type="molecule type" value="Genomic_DNA"/>
</dbReference>
<dbReference type="RefSeq" id="WP_011705094.1">
    <property type="nucleotide sequence ID" value="NC_008570.1"/>
</dbReference>
<dbReference type="RefSeq" id="YP_855715.1">
    <property type="nucleotide sequence ID" value="NC_008570.1"/>
</dbReference>
<dbReference type="SMR" id="A0KHG4"/>
<dbReference type="STRING" id="380703.AHA_1174"/>
<dbReference type="EnsemblBacteria" id="ABK38997">
    <property type="protein sequence ID" value="ABK38997"/>
    <property type="gene ID" value="AHA_1174"/>
</dbReference>
<dbReference type="GeneID" id="4489598"/>
<dbReference type="KEGG" id="aha:AHA_1174"/>
<dbReference type="PATRIC" id="fig|380703.7.peg.1181"/>
<dbReference type="eggNOG" id="COG0264">
    <property type="taxonomic scope" value="Bacteria"/>
</dbReference>
<dbReference type="HOGENOM" id="CLU_047155_0_2_6"/>
<dbReference type="OrthoDB" id="9808348at2"/>
<dbReference type="Proteomes" id="UP000000756">
    <property type="component" value="Chromosome"/>
</dbReference>
<dbReference type="GO" id="GO:0005737">
    <property type="term" value="C:cytoplasm"/>
    <property type="evidence" value="ECO:0007669"/>
    <property type="project" value="UniProtKB-SubCell"/>
</dbReference>
<dbReference type="GO" id="GO:0003746">
    <property type="term" value="F:translation elongation factor activity"/>
    <property type="evidence" value="ECO:0007669"/>
    <property type="project" value="UniProtKB-UniRule"/>
</dbReference>
<dbReference type="CDD" id="cd14275">
    <property type="entry name" value="UBA_EF-Ts"/>
    <property type="match status" value="1"/>
</dbReference>
<dbReference type="FunFam" id="1.10.286.20:FF:000001">
    <property type="entry name" value="Elongation factor Ts"/>
    <property type="match status" value="1"/>
</dbReference>
<dbReference type="FunFam" id="1.10.8.10:FF:000001">
    <property type="entry name" value="Elongation factor Ts"/>
    <property type="match status" value="1"/>
</dbReference>
<dbReference type="FunFam" id="3.30.479.20:FF:000001">
    <property type="entry name" value="Elongation factor Ts"/>
    <property type="match status" value="1"/>
</dbReference>
<dbReference type="Gene3D" id="1.10.286.20">
    <property type="match status" value="1"/>
</dbReference>
<dbReference type="Gene3D" id="1.10.8.10">
    <property type="entry name" value="DNA helicase RuvA subunit, C-terminal domain"/>
    <property type="match status" value="1"/>
</dbReference>
<dbReference type="Gene3D" id="3.30.479.20">
    <property type="entry name" value="Elongation factor Ts, dimerisation domain"/>
    <property type="match status" value="2"/>
</dbReference>
<dbReference type="HAMAP" id="MF_00050">
    <property type="entry name" value="EF_Ts"/>
    <property type="match status" value="1"/>
</dbReference>
<dbReference type="InterPro" id="IPR036402">
    <property type="entry name" value="EF-Ts_dimer_sf"/>
</dbReference>
<dbReference type="InterPro" id="IPR001816">
    <property type="entry name" value="Transl_elong_EFTs/EF1B"/>
</dbReference>
<dbReference type="InterPro" id="IPR014039">
    <property type="entry name" value="Transl_elong_EFTs/EF1B_dimer"/>
</dbReference>
<dbReference type="InterPro" id="IPR018101">
    <property type="entry name" value="Transl_elong_Ts_CS"/>
</dbReference>
<dbReference type="InterPro" id="IPR009060">
    <property type="entry name" value="UBA-like_sf"/>
</dbReference>
<dbReference type="NCBIfam" id="TIGR00116">
    <property type="entry name" value="tsf"/>
    <property type="match status" value="1"/>
</dbReference>
<dbReference type="PANTHER" id="PTHR11741">
    <property type="entry name" value="ELONGATION FACTOR TS"/>
    <property type="match status" value="1"/>
</dbReference>
<dbReference type="PANTHER" id="PTHR11741:SF0">
    <property type="entry name" value="ELONGATION FACTOR TS, MITOCHONDRIAL"/>
    <property type="match status" value="1"/>
</dbReference>
<dbReference type="Pfam" id="PF00889">
    <property type="entry name" value="EF_TS"/>
    <property type="match status" value="1"/>
</dbReference>
<dbReference type="SUPFAM" id="SSF54713">
    <property type="entry name" value="Elongation factor Ts (EF-Ts), dimerisation domain"/>
    <property type="match status" value="2"/>
</dbReference>
<dbReference type="SUPFAM" id="SSF46934">
    <property type="entry name" value="UBA-like"/>
    <property type="match status" value="1"/>
</dbReference>
<dbReference type="PROSITE" id="PS01127">
    <property type="entry name" value="EF_TS_2"/>
    <property type="match status" value="1"/>
</dbReference>
<proteinExistence type="inferred from homology"/>
<accession>A0KHG4</accession>
<feature type="chain" id="PRO_1000006047" description="Elongation factor Ts">
    <location>
        <begin position="1"/>
        <end position="293"/>
    </location>
</feature>
<feature type="region of interest" description="Involved in Mg(2+) ion dislocation from EF-Tu" evidence="1">
    <location>
        <begin position="80"/>
        <end position="83"/>
    </location>
</feature>
<sequence length="293" mass="31200">MANISAALVKELRERTAAGMMDCKKALEEAAGDIELAIENMRKSGQAKAAKKAGRIAAEGVIFARTEGNVAVMIELNCETDFVSKDAGFLAMGQKIVEIAATQKIADVDALKAADFGNGESVELTITNLIAKIGENMNLRRVMLVEGDNLGTYVHGSRIGVITKLAGGSDELAKDLAMHVAANSPQFVKPEDVSAEVVAKEREIQIDIAINSGKPKEIAEKMVEGRMKKFTGEVSLTGQPFVKDPSMTVAELLKKEGADVVSFTRFEVGEGIEKQETDFAAEVAAQIAAAQKA</sequence>
<evidence type="ECO:0000255" key="1">
    <source>
        <dbReference type="HAMAP-Rule" id="MF_00050"/>
    </source>
</evidence>
<organism>
    <name type="scientific">Aeromonas hydrophila subsp. hydrophila (strain ATCC 7966 / DSM 30187 / BCRC 13018 / CCUG 14551 / JCM 1027 / KCTC 2358 / NCIMB 9240 / NCTC 8049)</name>
    <dbReference type="NCBI Taxonomy" id="380703"/>
    <lineage>
        <taxon>Bacteria</taxon>
        <taxon>Pseudomonadati</taxon>
        <taxon>Pseudomonadota</taxon>
        <taxon>Gammaproteobacteria</taxon>
        <taxon>Aeromonadales</taxon>
        <taxon>Aeromonadaceae</taxon>
        <taxon>Aeromonas</taxon>
    </lineage>
</organism>
<protein>
    <recommendedName>
        <fullName evidence="1">Elongation factor Ts</fullName>
        <shortName evidence="1">EF-Ts</shortName>
    </recommendedName>
</protein>
<name>EFTS_AERHH</name>
<gene>
    <name evidence="1" type="primary">tsf</name>
    <name type="ordered locus">AHA_1174</name>
</gene>
<keyword id="KW-0963">Cytoplasm</keyword>
<keyword id="KW-0251">Elongation factor</keyword>
<keyword id="KW-0648">Protein biosynthesis</keyword>
<keyword id="KW-1185">Reference proteome</keyword>
<comment type="function">
    <text evidence="1">Associates with the EF-Tu.GDP complex and induces the exchange of GDP to GTP. It remains bound to the aminoacyl-tRNA.EF-Tu.GTP complex up to the GTP hydrolysis stage on the ribosome.</text>
</comment>
<comment type="subcellular location">
    <subcellularLocation>
        <location evidence="1">Cytoplasm</location>
    </subcellularLocation>
</comment>
<comment type="similarity">
    <text evidence="1">Belongs to the EF-Ts family.</text>
</comment>
<reference key="1">
    <citation type="journal article" date="2006" name="J. Bacteriol.">
        <title>Genome sequence of Aeromonas hydrophila ATCC 7966T: jack of all trades.</title>
        <authorList>
            <person name="Seshadri R."/>
            <person name="Joseph S.W."/>
            <person name="Chopra A.K."/>
            <person name="Sha J."/>
            <person name="Shaw J."/>
            <person name="Graf J."/>
            <person name="Haft D.H."/>
            <person name="Wu M."/>
            <person name="Ren Q."/>
            <person name="Rosovitz M.J."/>
            <person name="Madupu R."/>
            <person name="Tallon L."/>
            <person name="Kim M."/>
            <person name="Jin S."/>
            <person name="Vuong H."/>
            <person name="Stine O.C."/>
            <person name="Ali A."/>
            <person name="Horneman A.J."/>
            <person name="Heidelberg J.F."/>
        </authorList>
    </citation>
    <scope>NUCLEOTIDE SEQUENCE [LARGE SCALE GENOMIC DNA]</scope>
    <source>
        <strain>ATCC 7966 / DSM 30187 / BCRC 13018 / CCUG 14551 / JCM 1027 / KCTC 2358 / NCIMB 9240 / NCTC 8049</strain>
    </source>
</reference>